<proteinExistence type="inferred from homology"/>
<sequence>MAKRKANHVIPGMNAAKAQGMGAGYNEKFSNEPLTEAQRQNNKKRKKNQ</sequence>
<evidence type="ECO:0000255" key="1">
    <source>
        <dbReference type="HAMAP-Rule" id="MF_00665"/>
    </source>
</evidence>
<evidence type="ECO:0000256" key="2">
    <source>
        <dbReference type="SAM" id="MobiDB-lite"/>
    </source>
</evidence>
<evidence type="ECO:0000305" key="3"/>
<keyword id="KW-0749">Sporulation</keyword>
<reference key="1">
    <citation type="journal article" date="2007" name="Proc. Natl. Acad. Sci. U.S.A.">
        <title>Genome and proteome of long-chain alkane degrading Geobacillus thermodenitrificans NG80-2 isolated from a deep-subsurface oil reservoir.</title>
        <authorList>
            <person name="Feng L."/>
            <person name="Wang W."/>
            <person name="Cheng J."/>
            <person name="Ren Y."/>
            <person name="Zhao G."/>
            <person name="Gao C."/>
            <person name="Tang Y."/>
            <person name="Liu X."/>
            <person name="Han W."/>
            <person name="Peng X."/>
            <person name="Liu R."/>
            <person name="Wang L."/>
        </authorList>
    </citation>
    <scope>NUCLEOTIDE SEQUENCE [LARGE SCALE GENOMIC DNA]</scope>
    <source>
        <strain>NG80-2</strain>
    </source>
</reference>
<protein>
    <recommendedName>
        <fullName evidence="1">Small, acid-soluble spore protein O</fullName>
        <shortName evidence="1">SASP O</shortName>
    </recommendedName>
</protein>
<gene>
    <name evidence="1" type="primary">sspO</name>
    <name type="ordered locus">GTNG_1205</name>
</gene>
<name>SSPO_GEOTN</name>
<accession>A4IMM3</accession>
<feature type="chain" id="PRO_0000329093" description="Small, acid-soluble spore protein O">
    <location>
        <begin position="1"/>
        <end position="49"/>
    </location>
</feature>
<feature type="region of interest" description="Disordered" evidence="2">
    <location>
        <begin position="23"/>
        <end position="49"/>
    </location>
</feature>
<dbReference type="EMBL" id="CP000557">
    <property type="protein sequence ID" value="ABO66577.1"/>
    <property type="status" value="ALT_INIT"/>
    <property type="molecule type" value="Genomic_DNA"/>
</dbReference>
<dbReference type="RefSeq" id="WP_041264360.1">
    <property type="nucleotide sequence ID" value="NC_009328.1"/>
</dbReference>
<dbReference type="KEGG" id="gtn:GTNG_1205"/>
<dbReference type="eggNOG" id="ENOG5033BZS">
    <property type="taxonomic scope" value="Bacteria"/>
</dbReference>
<dbReference type="HOGENOM" id="CLU_2569011_0_0_9"/>
<dbReference type="Proteomes" id="UP000001578">
    <property type="component" value="Chromosome"/>
</dbReference>
<dbReference type="GO" id="GO:0042601">
    <property type="term" value="C:endospore-forming forespore"/>
    <property type="evidence" value="ECO:0007669"/>
    <property type="project" value="InterPro"/>
</dbReference>
<dbReference type="GO" id="GO:0030436">
    <property type="term" value="P:asexual sporulation"/>
    <property type="evidence" value="ECO:0007669"/>
    <property type="project" value="UniProtKB-UniRule"/>
</dbReference>
<dbReference type="GO" id="GO:0030435">
    <property type="term" value="P:sporulation resulting in formation of a cellular spore"/>
    <property type="evidence" value="ECO:0007669"/>
    <property type="project" value="UniProtKB-KW"/>
</dbReference>
<dbReference type="HAMAP" id="MF_00665">
    <property type="entry name" value="SspO"/>
    <property type="match status" value="1"/>
</dbReference>
<dbReference type="InterPro" id="IPR012613">
    <property type="entry name" value="SASP_SspO"/>
</dbReference>
<dbReference type="NCBIfam" id="TIGR02864">
    <property type="entry name" value="spore_sspO"/>
    <property type="match status" value="1"/>
</dbReference>
<dbReference type="Pfam" id="PF08175">
    <property type="entry name" value="SspO"/>
    <property type="match status" value="1"/>
</dbReference>
<comment type="subcellular location">
    <subcellularLocation>
        <location evidence="1">Spore core</location>
    </subcellularLocation>
</comment>
<comment type="induction">
    <text evidence="1">Expressed only in the forespore compartment of sporulating cells.</text>
</comment>
<comment type="similarity">
    <text evidence="1">Belongs to the SspO family.</text>
</comment>
<comment type="sequence caution" evidence="3">
    <conflict type="erroneous initiation">
        <sequence resource="EMBL-CDS" id="ABO66577"/>
    </conflict>
</comment>
<organism>
    <name type="scientific">Geobacillus thermodenitrificans (strain NG80-2)</name>
    <dbReference type="NCBI Taxonomy" id="420246"/>
    <lineage>
        <taxon>Bacteria</taxon>
        <taxon>Bacillati</taxon>
        <taxon>Bacillota</taxon>
        <taxon>Bacilli</taxon>
        <taxon>Bacillales</taxon>
        <taxon>Anoxybacillaceae</taxon>
        <taxon>Geobacillus</taxon>
    </lineage>
</organism>